<name>FMO2_RABIT</name>
<sequence>MAKKVAVIGAGVSGLISLKCCVDEGLEPTCFERTEDIGGLWRFKENVEDGRASIYQSVITNTSKEMSCFSDFPMPEDFPNFLHNSKLLEYFRIFAKKFDLLKYIQFQTTVISVKKRPDFASSGQWEVVTQSNSKQQSAVFDAVMVCSGHHILPNIPLKSFPGIEKFKGQYFHSRQYKHPAGLEGKRILVIGIGNSASDIAVELSKKAAQVYISTRKGSWVMSRISEDGYPWDMVFHTRFSSMLRNVLPRMIVKWMMEQQMNRWFNHENYGLAPENKYLMKEPVLNDDLPSRILYGTIKVKRRVKELTESAAIFEDGTVEEDIDVIVFATGYTFAFPFLEESLVKIEDNMVSLYKYMFPPQLEKSTFACLGLIQPLGSIFPTVELQARWATRVFKGLCSLPSKETMMADIIKRNENRIALFGESLSQKLQTNYIDYLDELALEIGAKPDLVSFLFKDPKLAVKLYFGPCNSYQYRLVGPGQWEGARNAIFTQKQRILKPLKTRTLKASSNFPVSFLLKFLGLFALVLAFLFQLQWF</sequence>
<protein>
    <recommendedName>
        <fullName evidence="2">Dimethylaniline monooxygenase [N-oxide-forming] 2</fullName>
        <ecNumber evidence="5 7 8 9">1.14.13.-</ecNumber>
        <ecNumber evidence="6 11">1.14.13.8</ecNumber>
    </recommendedName>
    <alternativeName>
        <fullName>Dimethylaniline oxidase 2</fullName>
    </alternativeName>
    <alternativeName>
        <fullName>FMO 1B1</fullName>
    </alternativeName>
    <alternativeName>
        <fullName>Pulmonary flavin-containing monooxygenase 2</fullName>
        <shortName>FMO 2</shortName>
    </alternativeName>
</protein>
<comment type="function">
    <text evidence="5 6 7 8 9 11">Catalyzes the oxidative metabolism of numerous xenobiotics, including mainly therapeutic drugs and insecticides that contain a soft nucleophile, most commonly nitrogen and sulfur and participates to their bioactivation (PubMed:10950853, PubMed:11302936, PubMed:15144220, PubMed:15294458, PubMed:16620765, PubMed:3785145). Most drug substrates are tertiary amines such as prochlorperazine and trifluoperazine which are N-oxygenated to form the N-oxide, or sulfides such as thiourea and ethionamide, which are S-oxygenated to the sulfoxide (PubMed:15144220, PubMed:16620765, PubMed:3785145). Others include primary alkylamines such as N-dodecylamine and octan-1-amine that are sequentially monooxygenated to oximes through intermediate hydroxylamines and both steps are NADPH- and oxygen-dependent (PubMed:3785145). Also metabolized N-Deacetyl ketoconazole (DAK) to N-hydroxy-DAK and appears to further metabolizes N-hydroxy-DAK to two others metabolites (PubMed:10950853). Also catalyzes S-oxygenation of the thioether-containing organophosphate insecticides, phorate and disulfoton (PubMed:15294458).</text>
</comment>
<comment type="catalytic activity">
    <reaction evidence="6 11">
        <text>N,N-dimethylaniline + NADPH + O2 + H(+) = N,N-dimethylaniline N-oxide + NADP(+) + H2O</text>
        <dbReference type="Rhea" id="RHEA:24468"/>
        <dbReference type="ChEBI" id="CHEBI:15377"/>
        <dbReference type="ChEBI" id="CHEBI:15378"/>
        <dbReference type="ChEBI" id="CHEBI:15379"/>
        <dbReference type="ChEBI" id="CHEBI:16269"/>
        <dbReference type="ChEBI" id="CHEBI:17735"/>
        <dbReference type="ChEBI" id="CHEBI:57783"/>
        <dbReference type="ChEBI" id="CHEBI:58349"/>
        <dbReference type="EC" id="1.14.13.8"/>
    </reaction>
    <physiologicalReaction direction="left-to-right" evidence="13">
        <dbReference type="Rhea" id="RHEA:24469"/>
    </physiologicalReaction>
</comment>
<comment type="cofactor">
    <cofactor evidence="1">
        <name>FAD</name>
        <dbReference type="ChEBI" id="CHEBI:57692"/>
    </cofactor>
</comment>
<comment type="cofactor">
    <cofactor evidence="1">
        <name>Mg(2+)</name>
        <dbReference type="ChEBI" id="CHEBI:18420"/>
    </cofactor>
</comment>
<comment type="biophysicochemical properties">
    <kinetics>
        <KM evidence="7">36 uM for thiourea</KM>
        <KM evidence="7">21 uM for ethylenethiourea</KM>
        <KM evidence="7">82 uM for N-phenylthiourea</KM>
        <KM evidence="7">25 uM for ANTU</KM>
        <KM evidence="6">310 uM for N,N-dimethylaniline</KM>
        <KM evidence="6">500 uM for (S)-nicotine</KM>
        <KM evidence="11">330 uM for N,N-dimethylaniline</KM>
        <KM evidence="11">46 uM for N,N-dimethyloctylamine</KM>
        <KM evidence="11">31 uM for trifluoperazine</KM>
        <KM evidence="11">1000 uM for desmethylperazine</KM>
        <KM evidence="11">120 uM for N-methyloctylamine</KM>
        <KM evidence="11">17 uM for N-methyloctylhydroxylamine</KM>
        <KM evidence="11">12000 uM for octan-1-amine</KM>
        <KM evidence="11">290 uM for N-dodecylamine</KM>
        <KM evidence="11">70 uM for N-methyloctylhydroxylamine</KM>
        <KM evidence="11">3 uM for N-dodecylhydroxylamine</KM>
        <KM evidence="8">57 uM for phorate</KM>
        <KM evidence="8">32 uM for disulfoton</KM>
        <Vmax evidence="11">450.0 nmol/min/mg enzyme toward N,N-dimethylaniline</Vmax>
        <Vmax evidence="11">450.0 nmol/min/mg enzyme toward N,N-dimethyloctylamine</Vmax>
        <Vmax evidence="11">450.0 nmol/min/mg enzyme toward trifluoperazine</Vmax>
        <Vmax evidence="11">900.0 nmol/min/mg enzyme toward desmethylperazine 1</Vmax>
        <Vmax evidence="11">550.0 nmol/min/mg enzyme toward N-methyloctylamine</Vmax>
        <Vmax evidence="11">500.0 nmol/min/mg enzyme toward N-methyloctylhydroxylamine</Vmax>
        <Vmax evidence="11">1600.0 nmol/min/mg enzyme toward octan-1-amine</Vmax>
        <Vmax evidence="11">1600.0 nmol/min/mg enzyme toward N-dodecylamine</Vmax>
        <Vmax evidence="11">600.0 nmol/min/mg enzyme toward N-methyloctylhydroxylamine</Vmax>
        <Vmax evidence="11">600.0 nmol/min/mg enzyme toward N-dodecylhydroxylamine</Vmax>
    </kinetics>
</comment>
<comment type="subcellular location">
    <subcellularLocation>
        <location evidence="9">Microsome membrane</location>
        <topology evidence="9">Single-pass membrane protein</topology>
    </subcellularLocation>
    <subcellularLocation>
        <location evidence="14">Endoplasmic reticulum membrane</location>
        <topology evidence="9">Single-pass membrane protein</topology>
    </subcellularLocation>
</comment>
<comment type="tissue specificity">
    <text>Lung.</text>
</comment>
<comment type="polymorphism">
    <text>There are two allelic forms.</text>
</comment>
<comment type="similarity">
    <text evidence="12">Belongs to the FMO family.</text>
</comment>
<reference key="1">
    <citation type="journal article" date="1990" name="J. Biol. Chem.">
        <title>The flavin-containing monooxygenase enzymes expressed in rabbit liver and lung are products of related but distinctly different genes.</title>
        <authorList>
            <person name="Lawton M.P."/>
            <person name="Gasser R."/>
            <person name="Tynes R.E."/>
            <person name="Hodgson E."/>
            <person name="Philpot R.M."/>
        </authorList>
    </citation>
    <scope>NUCLEOTIDE SEQUENCE [MRNA]</scope>
    <scope>PARTIAL PROTEIN SEQUENCE</scope>
    <source>
        <strain>New Zealand white</strain>
    </source>
</reference>
<reference key="2">
    <citation type="journal article" date="1992" name="Pharmacogenetics">
        <title>Guinea pig or rabbit lung flavin-containing monooxygenases with distinct mobilities in SDS-PAGE are allelic variants that differ at only two positions.</title>
        <authorList>
            <person name="Nikbakht K.N."/>
            <person name="Lawton M.P."/>
            <person name="Philpot R.M."/>
        </authorList>
    </citation>
    <scope>NUCLEOTIDE SEQUENCE [MRNA]</scope>
    <source>
        <strain>New Zealand white</strain>
        <tissue>Lung</tissue>
    </source>
</reference>
<reference key="3">
    <citation type="journal article" date="1991" name="Biochemistry">
        <title>Evidence for complex formation between rabbit lung flavin-containing monooxygenase and calreticulin.</title>
        <authorList>
            <person name="Guan S."/>
            <person name="Falick A.M."/>
            <person name="Williams D.E."/>
            <person name="Cashman J.R."/>
        </authorList>
    </citation>
    <scope>PARTIAL PROTEIN SEQUENCE</scope>
    <scope>ACETYLATION AT ALA-2</scope>
    <source>
        <tissue>Lung</tissue>
    </source>
</reference>
<reference key="4">
    <citation type="journal article" date="1986" name="Mol. Pharmacol.">
        <title>Substrate specificity of the rabbit lung flavin-containing monooxygenase for amines: oxidation products of primary alkylamines.</title>
        <authorList>
            <person name="Poulsen L.L."/>
            <person name="Taylor K."/>
            <person name="Williams D.E."/>
            <person name="Masters B.S."/>
            <person name="Ziegler D.M."/>
        </authorList>
    </citation>
    <scope>FUNCTION</scope>
    <scope>CATALYTIC ACTIVITY</scope>
    <scope>BIOPHYSICOCHEMICAL PROPERTIES</scope>
</reference>
<reference key="5">
    <citation type="journal article" date="2000" name="Drug Metab. Dispos.">
        <title>Isoform specificity of N-deacetyl ketoconazole by human and rabbit flavin-containing monooxygenases.</title>
        <authorList>
            <person name="Rodriguez R.J."/>
            <person name="Miranda C.L."/>
        </authorList>
    </citation>
    <scope>FUNCTION</scope>
    <scope>BIOPHYSICOCHEMICAL PROPERTIES</scope>
</reference>
<reference key="6">
    <citation type="journal article" date="2001" name="Drug Metab. Dispos.">
        <title>Characterization of expressed full-length and truncated FMO2 from rhesus monkey.</title>
        <authorList>
            <person name="Krueger S.K."/>
            <person name="Yueh M.F."/>
            <person name="Martin S.R."/>
            <person name="Pereira C.B."/>
            <person name="Williams D.E."/>
        </authorList>
    </citation>
    <scope>FUNCTION</scope>
    <scope>CATALYTIC ACTIVITY</scope>
    <scope>BIOPHYSICOCHEMICAL PROPERTIES</scope>
</reference>
<reference key="7">
    <citation type="journal article" date="2004" name="Biochem. Pharmacol.">
        <title>S-oxygenation of the thioether organophosphate insecticides phorate and disulfoton by human lung flavin-containing monooxygenase 2.</title>
        <authorList>
            <person name="Henderson M.C."/>
            <person name="Krueger S.K."/>
            <person name="Siddens L.K."/>
            <person name="Stevens J.F."/>
            <person name="Williams D.E."/>
        </authorList>
    </citation>
    <scope>FUNCTION</scope>
    <scope>BIOPHYSICOCHEMICAL PROPERTIES</scope>
</reference>
<reference key="8">
    <citation type="journal article" date="2004" name="Chem. Res. Toxicol.">
        <title>Human flavin-containing monooxygenase form 2 S-oxygenation: sulfenic acid formation from thioureas and oxidation of glutathione.</title>
        <authorList>
            <person name="Henderson M.C."/>
            <person name="Krueger S.K."/>
            <person name="Stevens J.F."/>
            <person name="Williams D.E."/>
        </authorList>
    </citation>
    <scope>FUNCTION</scope>
    <scope>BIOPHYSICOCHEMICAL PROPERTIES</scope>
</reference>
<reference key="9">
    <citation type="journal article" date="2006" name="Arch. Biochem. Biophys.">
        <title>C-Terminal truncation of rabbit flavin-containing monooxygenase isoform 2 enhances solubility.</title>
        <authorList>
            <person name="Krueger S.K."/>
            <person name="Siddens L.K."/>
            <person name="Henderson M.C."/>
            <person name="VanDyke J.E."/>
            <person name="Karplus P.A."/>
            <person name="Pereira C.B."/>
            <person name="Williams D.E."/>
        </authorList>
    </citation>
    <scope>FUNCTION</scope>
    <scope>SUBCELLULAR LOCATION</scope>
    <scope>MUTAGENESIS OF 510-PHE--PHE-535</scope>
</reference>
<dbReference type="EC" id="1.14.13.-" evidence="5 7 8 9"/>
<dbReference type="EC" id="1.14.13.8" evidence="6 11"/>
<dbReference type="EMBL" id="M32029">
    <property type="protein sequence ID" value="AAA31442.1"/>
    <property type="molecule type" value="mRNA"/>
</dbReference>
<dbReference type="PIR" id="B35182">
    <property type="entry name" value="B35182"/>
</dbReference>
<dbReference type="RefSeq" id="NP_001075753.1">
    <property type="nucleotide sequence ID" value="NM_001082284.1"/>
</dbReference>
<dbReference type="SMR" id="P17635"/>
<dbReference type="FunCoup" id="P17635">
    <property type="interactions" value="48"/>
</dbReference>
<dbReference type="STRING" id="9986.ENSOCUP00000004486"/>
<dbReference type="iPTMnet" id="P17635"/>
<dbReference type="PaxDb" id="9986-ENSOCUP00000004486"/>
<dbReference type="GeneID" id="100009119"/>
<dbReference type="KEGG" id="ocu:100009119"/>
<dbReference type="CTD" id="2327"/>
<dbReference type="eggNOG" id="KOG1399">
    <property type="taxonomic scope" value="Eukaryota"/>
</dbReference>
<dbReference type="InParanoid" id="P17635"/>
<dbReference type="OrthoDB" id="66881at2759"/>
<dbReference type="BRENDA" id="1.14.13.8">
    <property type="organism ID" value="1749"/>
</dbReference>
<dbReference type="Proteomes" id="UP000001811">
    <property type="component" value="Unplaced"/>
</dbReference>
<dbReference type="GO" id="GO:0005789">
    <property type="term" value="C:endoplasmic reticulum membrane"/>
    <property type="evidence" value="ECO:0007669"/>
    <property type="project" value="UniProtKB-SubCell"/>
</dbReference>
<dbReference type="GO" id="GO:0016020">
    <property type="term" value="C:membrane"/>
    <property type="evidence" value="ECO:0000250"/>
    <property type="project" value="UniProtKB"/>
</dbReference>
<dbReference type="GO" id="GO:0050660">
    <property type="term" value="F:flavin adenine dinucleotide binding"/>
    <property type="evidence" value="ECO:0007669"/>
    <property type="project" value="InterPro"/>
</dbReference>
<dbReference type="GO" id="GO:0004499">
    <property type="term" value="F:N,N-dimethylaniline monooxygenase activity"/>
    <property type="evidence" value="ECO:0007669"/>
    <property type="project" value="InterPro"/>
</dbReference>
<dbReference type="GO" id="GO:0050661">
    <property type="term" value="F:NADP binding"/>
    <property type="evidence" value="ECO:0007669"/>
    <property type="project" value="InterPro"/>
</dbReference>
<dbReference type="FunFam" id="3.50.50.60:FF:000042">
    <property type="entry name" value="Dimethylaniline monooxygenase [N-oxide-forming]"/>
    <property type="match status" value="1"/>
</dbReference>
<dbReference type="FunFam" id="3.50.50.60:FF:000073">
    <property type="entry name" value="Dimethylaniline monooxygenase [N-oxide-forming]"/>
    <property type="match status" value="1"/>
</dbReference>
<dbReference type="FunFam" id="3.50.50.60:FF:000409">
    <property type="entry name" value="Dimethylaniline monooxygenase [N-oxide-forming]"/>
    <property type="match status" value="1"/>
</dbReference>
<dbReference type="Gene3D" id="3.50.50.60">
    <property type="entry name" value="FAD/NAD(P)-binding domain"/>
    <property type="match status" value="4"/>
</dbReference>
<dbReference type="InterPro" id="IPR036188">
    <property type="entry name" value="FAD/NAD-bd_sf"/>
</dbReference>
<dbReference type="InterPro" id="IPR000960">
    <property type="entry name" value="Flavin_mOase"/>
</dbReference>
<dbReference type="InterPro" id="IPR020946">
    <property type="entry name" value="Flavin_mOase-like"/>
</dbReference>
<dbReference type="InterPro" id="IPR002254">
    <property type="entry name" value="Flavin_mOase_2"/>
</dbReference>
<dbReference type="InterPro" id="IPR050346">
    <property type="entry name" value="FMO-like"/>
</dbReference>
<dbReference type="PANTHER" id="PTHR23023">
    <property type="entry name" value="DIMETHYLANILINE MONOOXYGENASE"/>
    <property type="match status" value="1"/>
</dbReference>
<dbReference type="Pfam" id="PF00743">
    <property type="entry name" value="FMO-like"/>
    <property type="match status" value="1"/>
</dbReference>
<dbReference type="PIRSF" id="PIRSF000332">
    <property type="entry name" value="FMO"/>
    <property type="match status" value="1"/>
</dbReference>
<dbReference type="PRINTS" id="PR00370">
    <property type="entry name" value="FMOXYGENASE"/>
</dbReference>
<dbReference type="PRINTS" id="PR01122">
    <property type="entry name" value="FMOXYGENASE2"/>
</dbReference>
<dbReference type="SUPFAM" id="SSF51905">
    <property type="entry name" value="FAD/NAD(P)-binding domain"/>
    <property type="match status" value="2"/>
</dbReference>
<organism>
    <name type="scientific">Oryctolagus cuniculus</name>
    <name type="common">Rabbit</name>
    <dbReference type="NCBI Taxonomy" id="9986"/>
    <lineage>
        <taxon>Eukaryota</taxon>
        <taxon>Metazoa</taxon>
        <taxon>Chordata</taxon>
        <taxon>Craniata</taxon>
        <taxon>Vertebrata</taxon>
        <taxon>Euteleostomi</taxon>
        <taxon>Mammalia</taxon>
        <taxon>Eutheria</taxon>
        <taxon>Euarchontoglires</taxon>
        <taxon>Glires</taxon>
        <taxon>Lagomorpha</taxon>
        <taxon>Leporidae</taxon>
        <taxon>Oryctolagus</taxon>
    </lineage>
</organism>
<keyword id="KW-0007">Acetylation</keyword>
<keyword id="KW-0903">Direct protein sequencing</keyword>
<keyword id="KW-0256">Endoplasmic reticulum</keyword>
<keyword id="KW-0274">FAD</keyword>
<keyword id="KW-0285">Flavoprotein</keyword>
<keyword id="KW-1017">Isopeptide bond</keyword>
<keyword id="KW-0460">Magnesium</keyword>
<keyword id="KW-0472">Membrane</keyword>
<keyword id="KW-0492">Microsome</keyword>
<keyword id="KW-0503">Monooxygenase</keyword>
<keyword id="KW-0521">NADP</keyword>
<keyword id="KW-0560">Oxidoreductase</keyword>
<keyword id="KW-1185">Reference proteome</keyword>
<keyword id="KW-0812">Transmembrane</keyword>
<keyword id="KW-1133">Transmembrane helix</keyword>
<keyword id="KW-0832">Ubl conjugation</keyword>
<evidence type="ECO:0000250" key="1"/>
<evidence type="ECO:0000250" key="2">
    <source>
        <dbReference type="UniProtKB" id="Q99518"/>
    </source>
</evidence>
<evidence type="ECO:0000250" key="3">
    <source>
        <dbReference type="UniProtKB" id="Q9HFE4"/>
    </source>
</evidence>
<evidence type="ECO:0000255" key="4"/>
<evidence type="ECO:0000269" key="5">
    <source>
    </source>
</evidence>
<evidence type="ECO:0000269" key="6">
    <source>
    </source>
</evidence>
<evidence type="ECO:0000269" key="7">
    <source>
    </source>
</evidence>
<evidence type="ECO:0000269" key="8">
    <source>
    </source>
</evidence>
<evidence type="ECO:0000269" key="9">
    <source>
    </source>
</evidence>
<evidence type="ECO:0000269" key="10">
    <source>
    </source>
</evidence>
<evidence type="ECO:0000269" key="11">
    <source>
    </source>
</evidence>
<evidence type="ECO:0000305" key="12"/>
<evidence type="ECO:0000305" key="13">
    <source>
    </source>
</evidence>
<evidence type="ECO:0000305" key="14">
    <source>
    </source>
</evidence>
<feature type="initiator methionine" description="Removed" evidence="10">
    <location>
        <position position="1"/>
    </location>
</feature>
<feature type="chain" id="PRO_0000147650" description="Dimethylaniline monooxygenase [N-oxide-forming] 2">
    <location>
        <begin position="2"/>
        <end position="535"/>
    </location>
</feature>
<feature type="transmembrane region" description="Helical" evidence="4">
    <location>
        <begin position="510"/>
        <end position="530"/>
    </location>
</feature>
<feature type="binding site" evidence="3">
    <location>
        <begin position="9"/>
        <end position="13"/>
    </location>
    <ligand>
        <name>FAD</name>
        <dbReference type="ChEBI" id="CHEBI:57692"/>
    </ligand>
</feature>
<feature type="binding site" evidence="3">
    <location>
        <position position="32"/>
    </location>
    <ligand>
        <name>FAD</name>
        <dbReference type="ChEBI" id="CHEBI:57692"/>
    </ligand>
</feature>
<feature type="binding site" evidence="3">
    <location>
        <begin position="40"/>
        <end position="41"/>
    </location>
    <ligand>
        <name>FAD</name>
        <dbReference type="ChEBI" id="CHEBI:57692"/>
    </ligand>
</feature>
<feature type="binding site" evidence="3">
    <location>
        <begin position="60"/>
        <end position="61"/>
    </location>
    <ligand>
        <name>NADP(+)</name>
        <dbReference type="ChEBI" id="CHEBI:58349"/>
    </ligand>
</feature>
<feature type="binding site" evidence="3">
    <location>
        <begin position="61"/>
        <end position="62"/>
    </location>
    <ligand>
        <name>FAD</name>
        <dbReference type="ChEBI" id="CHEBI:57692"/>
    </ligand>
</feature>
<feature type="binding site" evidence="3">
    <location>
        <begin position="195"/>
        <end position="198"/>
    </location>
    <ligand>
        <name>NADP(+)</name>
        <dbReference type="ChEBI" id="CHEBI:58349"/>
    </ligand>
</feature>
<feature type="modified residue" description="N-acetylalanine" evidence="10">
    <location>
        <position position="2"/>
    </location>
</feature>
<feature type="cross-link" description="Glycyl lysine isopeptide (Lys-Gly) (interchain with G-Cter in SUMO)" evidence="2">
    <location>
        <position position="492"/>
    </location>
</feature>
<feature type="sequence variant" description="In PFMO-2 and PFMO-4.">
    <original>A</original>
    <variation>S</variation>
    <location>
        <position position="120"/>
    </location>
</feature>
<feature type="sequence variant" description="In PFMO-2 and PFMO-4.">
    <original>Q</original>
    <variation>E</variation>
    <location>
        <position position="136"/>
    </location>
</feature>
<feature type="mutagenesis site" description="Increases protein solubility in the absence of detergent." evidence="9">
    <location>
        <begin position="510"/>
        <end position="535"/>
    </location>
</feature>
<proteinExistence type="evidence at protein level"/>
<accession>P17635</accession>
<gene>
    <name evidence="2" type="primary">FMO2</name>
</gene>